<gene>
    <name evidence="1" type="primary">aspS</name>
    <name type="ordered locus">Pmen_1268</name>
</gene>
<sequence length="591" mass="66048">MMRSHYCGQLNESLDGQEITLCGWVHRRRDHGGVIFLDIRDREGLAQVVFDPDRAETFAKADRVRSEYVVKITGKVRLRPAGAVNPNMASGAIEVLGYELDVLNEAETPPFPLNEYTDVGEETRLRYRFIDLRRPEMAEKLKLRSRITSSIRRYLDDNGFLDVETPILTRATPEGARDYLVPSRTHAGSFFALPQSPQLFKQLLMVAGFDRYYQIAKCFRDEDLRADRQPEFTQIDIETSFLDEKDIMDITETMVRNLFKEVLGVEFGELPHMPLAEAMRRFGSDKPDLRIPLELVDVEDQLKDVEFKVFAGPANDPKCRVTALRVPGGASMPRKQIDDYTKFVGIYGAKGLAYIKVNERAAGVDGLQSPIVKNIPLDNINVILDRVGAVDGDIVFFGADKAKIVSEALGALRIKLGHDLNLLTCEWAPLWVVDFPMFEENDDGSLTAMHHPFTSPKCTPEDLEANPAAALSRAYDMVLNGTELGGGSIRIHDKAMQQTVFRVLGISEDEQQEKFGFLLDALKYGAPPHGGLAFGLDRLVMLMTGASSIREVIAFPKTQSAACVMTQAPGVVDAKSLRELHIRLREQAKAE</sequence>
<organism>
    <name type="scientific">Ectopseudomonas mendocina (strain ymp)</name>
    <name type="common">Pseudomonas mendocina</name>
    <dbReference type="NCBI Taxonomy" id="399739"/>
    <lineage>
        <taxon>Bacteria</taxon>
        <taxon>Pseudomonadati</taxon>
        <taxon>Pseudomonadota</taxon>
        <taxon>Gammaproteobacteria</taxon>
        <taxon>Pseudomonadales</taxon>
        <taxon>Pseudomonadaceae</taxon>
        <taxon>Ectopseudomonas</taxon>
    </lineage>
</organism>
<keyword id="KW-0030">Aminoacyl-tRNA synthetase</keyword>
<keyword id="KW-0067">ATP-binding</keyword>
<keyword id="KW-0963">Cytoplasm</keyword>
<keyword id="KW-0436">Ligase</keyword>
<keyword id="KW-0547">Nucleotide-binding</keyword>
<keyword id="KW-0648">Protein biosynthesis</keyword>
<name>SYDND_ECTM1</name>
<comment type="function">
    <text evidence="1">Aspartyl-tRNA synthetase with relaxed tRNA specificity since it is able to aspartylate not only its cognate tRNA(Asp) but also tRNA(Asn). Reaction proceeds in two steps: L-aspartate is first activated by ATP to form Asp-AMP and then transferred to the acceptor end of tRNA(Asp/Asn).</text>
</comment>
<comment type="catalytic activity">
    <reaction evidence="1">
        <text>tRNA(Asx) + L-aspartate + ATP = L-aspartyl-tRNA(Asx) + AMP + diphosphate</text>
        <dbReference type="Rhea" id="RHEA:18349"/>
        <dbReference type="Rhea" id="RHEA-COMP:9710"/>
        <dbReference type="Rhea" id="RHEA-COMP:9711"/>
        <dbReference type="ChEBI" id="CHEBI:29991"/>
        <dbReference type="ChEBI" id="CHEBI:30616"/>
        <dbReference type="ChEBI" id="CHEBI:33019"/>
        <dbReference type="ChEBI" id="CHEBI:78442"/>
        <dbReference type="ChEBI" id="CHEBI:78516"/>
        <dbReference type="ChEBI" id="CHEBI:456215"/>
        <dbReference type="EC" id="6.1.1.23"/>
    </reaction>
</comment>
<comment type="subunit">
    <text evidence="1">Homodimer.</text>
</comment>
<comment type="subcellular location">
    <subcellularLocation>
        <location evidence="1">Cytoplasm</location>
    </subcellularLocation>
</comment>
<comment type="similarity">
    <text evidence="1">Belongs to the class-II aminoacyl-tRNA synthetase family. Type 1 subfamily.</text>
</comment>
<accession>A4XRR7</accession>
<proteinExistence type="inferred from homology"/>
<protein>
    <recommendedName>
        <fullName evidence="1">Aspartate--tRNA(Asp/Asn) ligase</fullName>
        <ecNumber evidence="1">6.1.1.23</ecNumber>
    </recommendedName>
    <alternativeName>
        <fullName evidence="1">Aspartyl-tRNA synthetase</fullName>
        <shortName evidence="1">AspRS</shortName>
    </alternativeName>
    <alternativeName>
        <fullName evidence="1">Non-discriminating aspartyl-tRNA synthetase</fullName>
        <shortName evidence="1">ND-AspRS</shortName>
    </alternativeName>
</protein>
<reference key="1">
    <citation type="submission" date="2007-04" db="EMBL/GenBank/DDBJ databases">
        <title>Complete sequence of Pseudomonas mendocina ymp.</title>
        <authorList>
            <consortium name="US DOE Joint Genome Institute"/>
            <person name="Copeland A."/>
            <person name="Lucas S."/>
            <person name="Lapidus A."/>
            <person name="Barry K."/>
            <person name="Glavina del Rio T."/>
            <person name="Dalin E."/>
            <person name="Tice H."/>
            <person name="Pitluck S."/>
            <person name="Kiss H."/>
            <person name="Brettin T."/>
            <person name="Detter J.C."/>
            <person name="Bruce D."/>
            <person name="Han C."/>
            <person name="Schmutz J."/>
            <person name="Larimer F."/>
            <person name="Land M."/>
            <person name="Hauser L."/>
            <person name="Kyrpides N."/>
            <person name="Mikhailova N."/>
            <person name="Hersman L."/>
            <person name="Dubois J."/>
            <person name="Maurice P."/>
            <person name="Richardson P."/>
        </authorList>
    </citation>
    <scope>NUCLEOTIDE SEQUENCE [LARGE SCALE GENOMIC DNA]</scope>
    <source>
        <strain>ymp</strain>
    </source>
</reference>
<feature type="chain" id="PRO_1000006730" description="Aspartate--tRNA(Asp/Asn) ligase">
    <location>
        <begin position="1"/>
        <end position="591"/>
    </location>
</feature>
<feature type="region of interest" description="Aspartate" evidence="1">
    <location>
        <begin position="198"/>
        <end position="201"/>
    </location>
</feature>
<feature type="binding site" evidence="1">
    <location>
        <position position="174"/>
    </location>
    <ligand>
        <name>L-aspartate</name>
        <dbReference type="ChEBI" id="CHEBI:29991"/>
    </ligand>
</feature>
<feature type="binding site" evidence="1">
    <location>
        <begin position="220"/>
        <end position="222"/>
    </location>
    <ligand>
        <name>ATP</name>
        <dbReference type="ChEBI" id="CHEBI:30616"/>
    </ligand>
</feature>
<feature type="binding site" evidence="1">
    <location>
        <position position="220"/>
    </location>
    <ligand>
        <name>L-aspartate</name>
        <dbReference type="ChEBI" id="CHEBI:29991"/>
    </ligand>
</feature>
<feature type="binding site" evidence="1">
    <location>
        <position position="229"/>
    </location>
    <ligand>
        <name>ATP</name>
        <dbReference type="ChEBI" id="CHEBI:30616"/>
    </ligand>
</feature>
<feature type="binding site" evidence="1">
    <location>
        <position position="450"/>
    </location>
    <ligand>
        <name>L-aspartate</name>
        <dbReference type="ChEBI" id="CHEBI:29991"/>
    </ligand>
</feature>
<feature type="binding site" evidence="1">
    <location>
        <position position="483"/>
    </location>
    <ligand>
        <name>ATP</name>
        <dbReference type="ChEBI" id="CHEBI:30616"/>
    </ligand>
</feature>
<feature type="binding site" evidence="1">
    <location>
        <position position="490"/>
    </location>
    <ligand>
        <name>L-aspartate</name>
        <dbReference type="ChEBI" id="CHEBI:29991"/>
    </ligand>
</feature>
<feature type="binding site" evidence="1">
    <location>
        <begin position="535"/>
        <end position="538"/>
    </location>
    <ligand>
        <name>ATP</name>
        <dbReference type="ChEBI" id="CHEBI:30616"/>
    </ligand>
</feature>
<feature type="site" description="Important for tRNA non-discrimination" evidence="1">
    <location>
        <position position="31"/>
    </location>
</feature>
<feature type="site" description="Important for tRNA non-discrimination" evidence="1">
    <location>
        <position position="82"/>
    </location>
</feature>
<evidence type="ECO:0000255" key="1">
    <source>
        <dbReference type="HAMAP-Rule" id="MF_00044"/>
    </source>
</evidence>
<dbReference type="EC" id="6.1.1.23" evidence="1"/>
<dbReference type="EMBL" id="CP000680">
    <property type="protein sequence ID" value="ABP84033.1"/>
    <property type="molecule type" value="Genomic_DNA"/>
</dbReference>
<dbReference type="SMR" id="A4XRR7"/>
<dbReference type="STRING" id="399739.Pmen_1268"/>
<dbReference type="KEGG" id="pmy:Pmen_1268"/>
<dbReference type="PATRIC" id="fig|399739.8.peg.1283"/>
<dbReference type="eggNOG" id="COG0173">
    <property type="taxonomic scope" value="Bacteria"/>
</dbReference>
<dbReference type="HOGENOM" id="CLU_014330_3_2_6"/>
<dbReference type="OrthoDB" id="9802326at2"/>
<dbReference type="GO" id="GO:0005737">
    <property type="term" value="C:cytoplasm"/>
    <property type="evidence" value="ECO:0007669"/>
    <property type="project" value="UniProtKB-SubCell"/>
</dbReference>
<dbReference type="GO" id="GO:0004815">
    <property type="term" value="F:aspartate-tRNA ligase activity"/>
    <property type="evidence" value="ECO:0007669"/>
    <property type="project" value="UniProtKB-UniRule"/>
</dbReference>
<dbReference type="GO" id="GO:0050560">
    <property type="term" value="F:aspartate-tRNA(Asn) ligase activity"/>
    <property type="evidence" value="ECO:0007669"/>
    <property type="project" value="UniProtKB-EC"/>
</dbReference>
<dbReference type="GO" id="GO:0005524">
    <property type="term" value="F:ATP binding"/>
    <property type="evidence" value="ECO:0007669"/>
    <property type="project" value="UniProtKB-UniRule"/>
</dbReference>
<dbReference type="GO" id="GO:0003676">
    <property type="term" value="F:nucleic acid binding"/>
    <property type="evidence" value="ECO:0007669"/>
    <property type="project" value="InterPro"/>
</dbReference>
<dbReference type="GO" id="GO:0006422">
    <property type="term" value="P:aspartyl-tRNA aminoacylation"/>
    <property type="evidence" value="ECO:0007669"/>
    <property type="project" value="UniProtKB-UniRule"/>
</dbReference>
<dbReference type="CDD" id="cd00777">
    <property type="entry name" value="AspRS_core"/>
    <property type="match status" value="1"/>
</dbReference>
<dbReference type="CDD" id="cd04317">
    <property type="entry name" value="EcAspRS_like_N"/>
    <property type="match status" value="1"/>
</dbReference>
<dbReference type="Gene3D" id="3.30.930.10">
    <property type="entry name" value="Bira Bifunctional Protein, Domain 2"/>
    <property type="match status" value="1"/>
</dbReference>
<dbReference type="Gene3D" id="3.30.1360.30">
    <property type="entry name" value="GAD-like domain"/>
    <property type="match status" value="1"/>
</dbReference>
<dbReference type="Gene3D" id="2.40.50.140">
    <property type="entry name" value="Nucleic acid-binding proteins"/>
    <property type="match status" value="1"/>
</dbReference>
<dbReference type="HAMAP" id="MF_00044">
    <property type="entry name" value="Asp_tRNA_synth_type1"/>
    <property type="match status" value="1"/>
</dbReference>
<dbReference type="InterPro" id="IPR004364">
    <property type="entry name" value="Aa-tRNA-synt_II"/>
</dbReference>
<dbReference type="InterPro" id="IPR006195">
    <property type="entry name" value="aa-tRNA-synth_II"/>
</dbReference>
<dbReference type="InterPro" id="IPR045864">
    <property type="entry name" value="aa-tRNA-synth_II/BPL/LPL"/>
</dbReference>
<dbReference type="InterPro" id="IPR004524">
    <property type="entry name" value="Asp-tRNA-ligase_1"/>
</dbReference>
<dbReference type="InterPro" id="IPR047089">
    <property type="entry name" value="Asp-tRNA-ligase_1_N"/>
</dbReference>
<dbReference type="InterPro" id="IPR002312">
    <property type="entry name" value="Asp/Asn-tRNA-synth_IIb"/>
</dbReference>
<dbReference type="InterPro" id="IPR047090">
    <property type="entry name" value="AspRS_core"/>
</dbReference>
<dbReference type="InterPro" id="IPR004115">
    <property type="entry name" value="GAD-like_sf"/>
</dbReference>
<dbReference type="InterPro" id="IPR029351">
    <property type="entry name" value="GAD_dom"/>
</dbReference>
<dbReference type="InterPro" id="IPR012340">
    <property type="entry name" value="NA-bd_OB-fold"/>
</dbReference>
<dbReference type="InterPro" id="IPR004365">
    <property type="entry name" value="NA-bd_OB_tRNA"/>
</dbReference>
<dbReference type="NCBIfam" id="TIGR00459">
    <property type="entry name" value="aspS_bact"/>
    <property type="match status" value="1"/>
</dbReference>
<dbReference type="NCBIfam" id="NF001750">
    <property type="entry name" value="PRK00476.1"/>
    <property type="match status" value="1"/>
</dbReference>
<dbReference type="PANTHER" id="PTHR22594:SF5">
    <property type="entry name" value="ASPARTATE--TRNA LIGASE, MITOCHONDRIAL"/>
    <property type="match status" value="1"/>
</dbReference>
<dbReference type="PANTHER" id="PTHR22594">
    <property type="entry name" value="ASPARTYL/LYSYL-TRNA SYNTHETASE"/>
    <property type="match status" value="1"/>
</dbReference>
<dbReference type="Pfam" id="PF02938">
    <property type="entry name" value="GAD"/>
    <property type="match status" value="1"/>
</dbReference>
<dbReference type="Pfam" id="PF00152">
    <property type="entry name" value="tRNA-synt_2"/>
    <property type="match status" value="1"/>
</dbReference>
<dbReference type="Pfam" id="PF01336">
    <property type="entry name" value="tRNA_anti-codon"/>
    <property type="match status" value="1"/>
</dbReference>
<dbReference type="PRINTS" id="PR01042">
    <property type="entry name" value="TRNASYNTHASP"/>
</dbReference>
<dbReference type="SUPFAM" id="SSF55681">
    <property type="entry name" value="Class II aaRS and biotin synthetases"/>
    <property type="match status" value="1"/>
</dbReference>
<dbReference type="SUPFAM" id="SSF55261">
    <property type="entry name" value="GAD domain-like"/>
    <property type="match status" value="1"/>
</dbReference>
<dbReference type="SUPFAM" id="SSF50249">
    <property type="entry name" value="Nucleic acid-binding proteins"/>
    <property type="match status" value="1"/>
</dbReference>
<dbReference type="PROSITE" id="PS50862">
    <property type="entry name" value="AA_TRNA_LIGASE_II"/>
    <property type="match status" value="1"/>
</dbReference>